<gene>
    <name evidence="1" type="primary">fadR</name>
    <name type="ordered locus">EcE24377A_1332</name>
</gene>
<protein>
    <recommendedName>
        <fullName evidence="1">Fatty acid metabolism regulator protein</fullName>
    </recommendedName>
</protein>
<keyword id="KW-0010">Activator</keyword>
<keyword id="KW-0963">Cytoplasm</keyword>
<keyword id="KW-0238">DNA-binding</keyword>
<keyword id="KW-0276">Fatty acid metabolism</keyword>
<keyword id="KW-0443">Lipid metabolism</keyword>
<keyword id="KW-1185">Reference proteome</keyword>
<keyword id="KW-0678">Repressor</keyword>
<keyword id="KW-0804">Transcription</keyword>
<keyword id="KW-0805">Transcription regulation</keyword>
<proteinExistence type="inferred from homology"/>
<comment type="function">
    <text evidence="1">Multifunctional regulator of fatty acid metabolism.</text>
</comment>
<comment type="subunit">
    <text evidence="1">Homodimer.</text>
</comment>
<comment type="subcellular location">
    <subcellularLocation>
        <location evidence="1">Cytoplasm</location>
    </subcellularLocation>
</comment>
<feature type="chain" id="PRO_1000062055" description="Fatty acid metabolism regulator protein">
    <location>
        <begin position="1"/>
        <end position="239"/>
    </location>
</feature>
<feature type="domain" description="HTH gntR-type" evidence="1">
    <location>
        <begin position="6"/>
        <end position="74"/>
    </location>
</feature>
<feature type="DNA-binding region" description="H-T-H motif" evidence="1">
    <location>
        <begin position="34"/>
        <end position="53"/>
    </location>
</feature>
<sequence length="239" mass="26969">MVIKAQSPAGFAEEYIIESIWNNRFPPGTILPAERELSELIGVTRTTLREVLQRLARDGWLTIQHGKPTKVNNFWETSGLNILETLARLDHESVPQLIDNLLSVRTNISTIFIRTAFRQHPDKAQEVLATANEVADHADAFAELDYNIFRGLAFASGNPIYGLILNGMKGLYTRIGRHYFANPEARSLALGFYHKLSALCSEGAHDQVYETVRRYGHESGEIWHRMQKNLPGDLAIQGR</sequence>
<name>FADR_ECO24</name>
<evidence type="ECO:0000255" key="1">
    <source>
        <dbReference type="HAMAP-Rule" id="MF_00696"/>
    </source>
</evidence>
<dbReference type="EMBL" id="CP000800">
    <property type="protein sequence ID" value="ABV20748.1"/>
    <property type="molecule type" value="Genomic_DNA"/>
</dbReference>
<dbReference type="RefSeq" id="WP_000234823.1">
    <property type="nucleotide sequence ID" value="NC_009801.1"/>
</dbReference>
<dbReference type="SMR" id="A7ZKV8"/>
<dbReference type="GeneID" id="93776245"/>
<dbReference type="KEGG" id="ecw:EcE24377A_1332"/>
<dbReference type="HOGENOM" id="CLU_017584_9_4_6"/>
<dbReference type="Proteomes" id="UP000001122">
    <property type="component" value="Chromosome"/>
</dbReference>
<dbReference type="GO" id="GO:0005737">
    <property type="term" value="C:cytoplasm"/>
    <property type="evidence" value="ECO:0007669"/>
    <property type="project" value="UniProtKB-SubCell"/>
</dbReference>
<dbReference type="GO" id="GO:0003677">
    <property type="term" value="F:DNA binding"/>
    <property type="evidence" value="ECO:0007669"/>
    <property type="project" value="UniProtKB-KW"/>
</dbReference>
<dbReference type="GO" id="GO:0003700">
    <property type="term" value="F:DNA-binding transcription factor activity"/>
    <property type="evidence" value="ECO:0007669"/>
    <property type="project" value="UniProtKB-UniRule"/>
</dbReference>
<dbReference type="GO" id="GO:0000062">
    <property type="term" value="F:fatty-acyl-CoA binding"/>
    <property type="evidence" value="ECO:0007669"/>
    <property type="project" value="InterPro"/>
</dbReference>
<dbReference type="GO" id="GO:0006631">
    <property type="term" value="P:fatty acid metabolic process"/>
    <property type="evidence" value="ECO:0007669"/>
    <property type="project" value="UniProtKB-KW"/>
</dbReference>
<dbReference type="GO" id="GO:0019217">
    <property type="term" value="P:regulation of fatty acid metabolic process"/>
    <property type="evidence" value="ECO:0007669"/>
    <property type="project" value="UniProtKB-UniRule"/>
</dbReference>
<dbReference type="CDD" id="cd07377">
    <property type="entry name" value="WHTH_GntR"/>
    <property type="match status" value="1"/>
</dbReference>
<dbReference type="FunFam" id="1.10.10.10:FF:000036">
    <property type="entry name" value="Fatty acid metabolism regulator protein"/>
    <property type="match status" value="1"/>
</dbReference>
<dbReference type="FunFam" id="1.20.120.530:FF:000003">
    <property type="entry name" value="Fatty acid metabolism regulator protein"/>
    <property type="match status" value="1"/>
</dbReference>
<dbReference type="Gene3D" id="1.20.120.530">
    <property type="entry name" value="GntR ligand-binding domain-like"/>
    <property type="match status" value="1"/>
</dbReference>
<dbReference type="Gene3D" id="1.10.10.10">
    <property type="entry name" value="Winged helix-like DNA-binding domain superfamily/Winged helix DNA-binding domain"/>
    <property type="match status" value="1"/>
</dbReference>
<dbReference type="HAMAP" id="MF_00696">
    <property type="entry name" value="HTH_FadR"/>
    <property type="match status" value="1"/>
</dbReference>
<dbReference type="InterPro" id="IPR014178">
    <property type="entry name" value="FA-response_TF_FadR"/>
</dbReference>
<dbReference type="InterPro" id="IPR028374">
    <property type="entry name" value="FadR_C"/>
</dbReference>
<dbReference type="InterPro" id="IPR008920">
    <property type="entry name" value="TF_FadR/GntR_C"/>
</dbReference>
<dbReference type="InterPro" id="IPR000524">
    <property type="entry name" value="Tscrpt_reg_HTH_GntR"/>
</dbReference>
<dbReference type="InterPro" id="IPR036388">
    <property type="entry name" value="WH-like_DNA-bd_sf"/>
</dbReference>
<dbReference type="InterPro" id="IPR036390">
    <property type="entry name" value="WH_DNA-bd_sf"/>
</dbReference>
<dbReference type="NCBIfam" id="TIGR02812">
    <property type="entry name" value="fadR_gamma"/>
    <property type="match status" value="1"/>
</dbReference>
<dbReference type="NCBIfam" id="NF003444">
    <property type="entry name" value="PRK04984.1"/>
    <property type="match status" value="1"/>
</dbReference>
<dbReference type="PANTHER" id="PTHR43537:SF52">
    <property type="entry name" value="FATTY ACID METABOLISM REGULATOR PROTEIN"/>
    <property type="match status" value="1"/>
</dbReference>
<dbReference type="PANTHER" id="PTHR43537">
    <property type="entry name" value="TRANSCRIPTIONAL REGULATOR, GNTR FAMILY"/>
    <property type="match status" value="1"/>
</dbReference>
<dbReference type="Pfam" id="PF07840">
    <property type="entry name" value="FadR_C"/>
    <property type="match status" value="1"/>
</dbReference>
<dbReference type="Pfam" id="PF00392">
    <property type="entry name" value="GntR"/>
    <property type="match status" value="1"/>
</dbReference>
<dbReference type="PRINTS" id="PR00035">
    <property type="entry name" value="HTHGNTR"/>
</dbReference>
<dbReference type="SMART" id="SM00345">
    <property type="entry name" value="HTH_GNTR"/>
    <property type="match status" value="1"/>
</dbReference>
<dbReference type="SUPFAM" id="SSF48008">
    <property type="entry name" value="GntR ligand-binding domain-like"/>
    <property type="match status" value="1"/>
</dbReference>
<dbReference type="SUPFAM" id="SSF46785">
    <property type="entry name" value="Winged helix' DNA-binding domain"/>
    <property type="match status" value="1"/>
</dbReference>
<dbReference type="PROSITE" id="PS50949">
    <property type="entry name" value="HTH_GNTR"/>
    <property type="match status" value="1"/>
</dbReference>
<accession>A7ZKV8</accession>
<reference key="1">
    <citation type="journal article" date="2008" name="J. Bacteriol.">
        <title>The pangenome structure of Escherichia coli: comparative genomic analysis of E. coli commensal and pathogenic isolates.</title>
        <authorList>
            <person name="Rasko D.A."/>
            <person name="Rosovitz M.J."/>
            <person name="Myers G.S.A."/>
            <person name="Mongodin E.F."/>
            <person name="Fricke W.F."/>
            <person name="Gajer P."/>
            <person name="Crabtree J."/>
            <person name="Sebaihia M."/>
            <person name="Thomson N.R."/>
            <person name="Chaudhuri R."/>
            <person name="Henderson I.R."/>
            <person name="Sperandio V."/>
            <person name="Ravel J."/>
        </authorList>
    </citation>
    <scope>NUCLEOTIDE SEQUENCE [LARGE SCALE GENOMIC DNA]</scope>
    <source>
        <strain>E24377A / ETEC</strain>
    </source>
</reference>
<organism>
    <name type="scientific">Escherichia coli O139:H28 (strain E24377A / ETEC)</name>
    <dbReference type="NCBI Taxonomy" id="331111"/>
    <lineage>
        <taxon>Bacteria</taxon>
        <taxon>Pseudomonadati</taxon>
        <taxon>Pseudomonadota</taxon>
        <taxon>Gammaproteobacteria</taxon>
        <taxon>Enterobacterales</taxon>
        <taxon>Enterobacteriaceae</taxon>
        <taxon>Escherichia</taxon>
    </lineage>
</organism>